<keyword id="KW-0004">4Fe-4S</keyword>
<keyword id="KW-0106">Calcium</keyword>
<keyword id="KW-0903">Direct protein sequencing</keyword>
<keyword id="KW-0249">Electron transport</keyword>
<keyword id="KW-0408">Iron</keyword>
<keyword id="KW-0411">Iron-sulfur</keyword>
<keyword id="KW-0479">Metal-binding</keyword>
<keyword id="KW-0560">Oxidoreductase</keyword>
<keyword id="KW-0574">Periplasm</keyword>
<keyword id="KW-1185">Reference proteome</keyword>
<keyword id="KW-0711">Selenium</keyword>
<keyword id="KW-0712">Selenocysteine</keyword>
<keyword id="KW-0732">Signal</keyword>
<keyword id="KW-0813">Transport</keyword>
<keyword id="KW-0826">Tungsten</keyword>
<dbReference type="EC" id="1.17.2.3" evidence="5 6"/>
<dbReference type="EMBL" id="AE017285">
    <property type="protein sequence ID" value="AAS97284.1"/>
    <property type="molecule type" value="Genomic_DNA"/>
</dbReference>
<dbReference type="RefSeq" id="WP_010940078.1">
    <property type="nucleotide sequence ID" value="NC_002937.3"/>
</dbReference>
<dbReference type="RefSeq" id="YP_012024.1">
    <property type="nucleotide sequence ID" value="NC_002937.3"/>
</dbReference>
<dbReference type="STRING" id="882.DVU_2812"/>
<dbReference type="PaxDb" id="882-DVU_2812"/>
<dbReference type="KEGG" id="dvu:DVU_2812"/>
<dbReference type="PATRIC" id="fig|882.5.peg.2544"/>
<dbReference type="eggNOG" id="COG0243">
    <property type="taxonomic scope" value="Bacteria"/>
</dbReference>
<dbReference type="eggNOG" id="COG3383">
    <property type="taxonomic scope" value="Bacteria"/>
</dbReference>
<dbReference type="HOGENOM" id="CLU_000422_1_2_7"/>
<dbReference type="OrthoDB" id="9757870at2"/>
<dbReference type="PhylomeDB" id="Q727P3"/>
<dbReference type="BioCyc" id="MetaCyc:MONOMER-22136"/>
<dbReference type="Proteomes" id="UP000002194">
    <property type="component" value="Chromosome"/>
</dbReference>
<dbReference type="GO" id="GO:0009326">
    <property type="term" value="C:formate dehydrogenase complex"/>
    <property type="evidence" value="ECO:0000314"/>
    <property type="project" value="UniProtKB"/>
</dbReference>
<dbReference type="GO" id="GO:0042597">
    <property type="term" value="C:periplasmic space"/>
    <property type="evidence" value="ECO:0000314"/>
    <property type="project" value="UniProtKB"/>
</dbReference>
<dbReference type="GO" id="GO:0051539">
    <property type="term" value="F:4 iron, 4 sulfur cluster binding"/>
    <property type="evidence" value="ECO:0007669"/>
    <property type="project" value="UniProtKB-KW"/>
</dbReference>
<dbReference type="GO" id="GO:0009055">
    <property type="term" value="F:electron transfer activity"/>
    <property type="evidence" value="ECO:0007669"/>
    <property type="project" value="InterPro"/>
</dbReference>
<dbReference type="GO" id="GO:0047111">
    <property type="term" value="F:formate dehydrogenase (cytochrome-c-553) activity"/>
    <property type="evidence" value="ECO:0000314"/>
    <property type="project" value="UniProtKB"/>
</dbReference>
<dbReference type="GO" id="GO:0008863">
    <property type="term" value="F:formate dehydrogenase (NAD+) activity"/>
    <property type="evidence" value="ECO:0007669"/>
    <property type="project" value="InterPro"/>
</dbReference>
<dbReference type="GO" id="GO:0030151">
    <property type="term" value="F:molybdenum ion binding"/>
    <property type="evidence" value="ECO:0007669"/>
    <property type="project" value="TreeGrafter"/>
</dbReference>
<dbReference type="GO" id="GO:0043546">
    <property type="term" value="F:molybdopterin cofactor binding"/>
    <property type="evidence" value="ECO:0007669"/>
    <property type="project" value="InterPro"/>
</dbReference>
<dbReference type="GO" id="GO:0009061">
    <property type="term" value="P:anaerobic respiration"/>
    <property type="evidence" value="ECO:0007669"/>
    <property type="project" value="TreeGrafter"/>
</dbReference>
<dbReference type="GO" id="GO:0018291">
    <property type="term" value="P:molybdenum incorporation into iron-sulfur cluster"/>
    <property type="evidence" value="ECO:0000314"/>
    <property type="project" value="UniProtKB"/>
</dbReference>
<dbReference type="CDD" id="cd02792">
    <property type="entry name" value="MopB_CT_Formate-Dh-Na-like"/>
    <property type="match status" value="1"/>
</dbReference>
<dbReference type="CDD" id="cd02752">
    <property type="entry name" value="MopB_Formate-Dh-Na-like"/>
    <property type="match status" value="1"/>
</dbReference>
<dbReference type="FunFam" id="3.30.200.210:FF:000006">
    <property type="entry name" value="Formate dehydrogenase 2 subunit alpha (cytochrome c-553)"/>
    <property type="match status" value="1"/>
</dbReference>
<dbReference type="FunFam" id="2.40.40.20:FF:000053">
    <property type="entry name" value="Formate dehydrogenase, alpha subunit, selenocysteine-containing"/>
    <property type="match status" value="1"/>
</dbReference>
<dbReference type="FunFam" id="3.40.228.10:FF:000009">
    <property type="entry name" value="Formate dehydrogenase, alpha subunit, selenocysteine-containing"/>
    <property type="match status" value="1"/>
</dbReference>
<dbReference type="Gene3D" id="2.40.40.20">
    <property type="match status" value="1"/>
</dbReference>
<dbReference type="Gene3D" id="3.30.200.210">
    <property type="match status" value="1"/>
</dbReference>
<dbReference type="Gene3D" id="3.40.50.740">
    <property type="match status" value="1"/>
</dbReference>
<dbReference type="Gene3D" id="3.40.228.10">
    <property type="entry name" value="Dimethylsulfoxide Reductase, domain 2"/>
    <property type="match status" value="2"/>
</dbReference>
<dbReference type="InterPro" id="IPR009010">
    <property type="entry name" value="Asp_de-COase-like_dom_sf"/>
</dbReference>
<dbReference type="InterPro" id="IPR006443">
    <property type="entry name" value="Formate-DH-alph_fdnG"/>
</dbReference>
<dbReference type="InterPro" id="IPR006657">
    <property type="entry name" value="MoPterin_dinucl-bd_dom"/>
</dbReference>
<dbReference type="InterPro" id="IPR006656">
    <property type="entry name" value="Mopterin_OxRdtase"/>
</dbReference>
<dbReference type="InterPro" id="IPR006963">
    <property type="entry name" value="Mopterin_OxRdtase_4Fe-4S_dom"/>
</dbReference>
<dbReference type="InterPro" id="IPR006655">
    <property type="entry name" value="Mopterin_OxRdtase_prok_CS"/>
</dbReference>
<dbReference type="InterPro" id="IPR027467">
    <property type="entry name" value="MopterinOxRdtase_cofactor_BS"/>
</dbReference>
<dbReference type="InterPro" id="IPR006311">
    <property type="entry name" value="TAT_signal"/>
</dbReference>
<dbReference type="NCBIfam" id="TIGR01553">
    <property type="entry name" value="formate-DH-alph"/>
    <property type="match status" value="1"/>
</dbReference>
<dbReference type="PANTHER" id="PTHR43598:SF1">
    <property type="entry name" value="FORMATE DEHYDROGENASE-O MAJOR SUBUNIT"/>
    <property type="match status" value="1"/>
</dbReference>
<dbReference type="PANTHER" id="PTHR43598">
    <property type="entry name" value="TUNGSTEN-CONTAINING FORMYLMETHANOFURAN DEHYDROGENASE 2 SUBUNIT B"/>
    <property type="match status" value="1"/>
</dbReference>
<dbReference type="Pfam" id="PF04879">
    <property type="entry name" value="Molybdop_Fe4S4"/>
    <property type="match status" value="1"/>
</dbReference>
<dbReference type="Pfam" id="PF00384">
    <property type="entry name" value="Molybdopterin"/>
    <property type="match status" value="1"/>
</dbReference>
<dbReference type="Pfam" id="PF01568">
    <property type="entry name" value="Molydop_binding"/>
    <property type="match status" value="1"/>
</dbReference>
<dbReference type="SMART" id="SM00926">
    <property type="entry name" value="Molybdop_Fe4S4"/>
    <property type="match status" value="1"/>
</dbReference>
<dbReference type="SUPFAM" id="SSF50692">
    <property type="entry name" value="ADC-like"/>
    <property type="match status" value="1"/>
</dbReference>
<dbReference type="SUPFAM" id="SSF53706">
    <property type="entry name" value="Formate dehydrogenase/DMSO reductase, domains 1-3"/>
    <property type="match status" value="1"/>
</dbReference>
<dbReference type="PROSITE" id="PS51669">
    <property type="entry name" value="4FE4S_MOW_BIS_MGD"/>
    <property type="match status" value="1"/>
</dbReference>
<dbReference type="PROSITE" id="PS00551">
    <property type="entry name" value="MOLYBDOPTERIN_PROK_1"/>
    <property type="match status" value="1"/>
</dbReference>
<dbReference type="PROSITE" id="PS00932">
    <property type="entry name" value="MOLYBDOPTERIN_PROK_3"/>
    <property type="match status" value="1"/>
</dbReference>
<dbReference type="PROSITE" id="PS51318">
    <property type="entry name" value="TAT"/>
    <property type="match status" value="1"/>
</dbReference>
<feature type="signal peptide" description="Tat-type signal" evidence="2 5 6">
    <location>
        <begin position="1"/>
        <end position="33"/>
    </location>
</feature>
<feature type="chain" id="PRO_0000430780" description="Formate dehydrogenase 2 subunit alpha (cytochrome c-553)" evidence="2 9">
    <location>
        <begin position="34"/>
        <end position="1012"/>
    </location>
</feature>
<feature type="domain" description="4Fe-4S Mo/W bis-MGD-type" evidence="3">
    <location>
        <begin position="43"/>
        <end position="99"/>
    </location>
</feature>
<feature type="binding site" evidence="1 3">
    <location>
        <position position="50"/>
    </location>
    <ligand>
        <name>[4Fe-4S] cluster</name>
        <dbReference type="ChEBI" id="CHEBI:49883"/>
    </ligand>
</feature>
<feature type="binding site" evidence="1 3">
    <location>
        <position position="53"/>
    </location>
    <ligand>
        <name>[4Fe-4S] cluster</name>
        <dbReference type="ChEBI" id="CHEBI:49883"/>
    </ligand>
</feature>
<feature type="binding site" evidence="1 3">
    <location>
        <position position="57"/>
    </location>
    <ligand>
        <name>[4Fe-4S] cluster</name>
        <dbReference type="ChEBI" id="CHEBI:49883"/>
    </ligand>
</feature>
<feature type="binding site" evidence="1 3">
    <location>
        <position position="85"/>
    </location>
    <ligand>
        <name>[4Fe-4S] cluster</name>
        <dbReference type="ChEBI" id="CHEBI:49883"/>
    </ligand>
</feature>
<feature type="binding site" evidence="1">
    <location>
        <position position="189"/>
    </location>
    <ligand>
        <name>W-bis(molybdopterin guanine dinucleotide)</name>
        <dbReference type="ChEBI" id="CHEBI:60537"/>
    </ligand>
    <ligandPart>
        <name>W</name>
        <dbReference type="ChEBI" id="CHEBI:27998"/>
    </ligandPart>
</feature>
<feature type="binding site" evidence="1">
    <location>
        <position position="389"/>
    </location>
    <ligand>
        <name>Ca(2+)</name>
        <dbReference type="ChEBI" id="CHEBI:29108"/>
    </ligand>
</feature>
<feature type="binding site" evidence="1">
    <location>
        <position position="391"/>
    </location>
    <ligand>
        <name>Ca(2+)</name>
        <dbReference type="ChEBI" id="CHEBI:29108"/>
    </ligand>
</feature>
<feature type="binding site" evidence="1">
    <location>
        <position position="394"/>
    </location>
    <ligand>
        <name>Ca(2+)</name>
        <dbReference type="ChEBI" id="CHEBI:29108"/>
    </ligand>
</feature>
<feature type="binding site" evidence="1">
    <location>
        <position position="424"/>
    </location>
    <ligand>
        <name>Ca(2+)</name>
        <dbReference type="ChEBI" id="CHEBI:29108"/>
    </ligand>
</feature>
<feature type="binding site" evidence="1">
    <location>
        <position position="426"/>
    </location>
    <ligand>
        <name>Ca(2+)</name>
        <dbReference type="ChEBI" id="CHEBI:29108"/>
    </ligand>
</feature>
<feature type="non-standard amino acid" description="Selenocysteine" evidence="1">
    <location>
        <position position="189"/>
    </location>
</feature>
<feature type="sequence conflict" description="In Ref. 3; AA sequence." evidence="10" ref="3">
    <original>IE</original>
    <variation>AI</variation>
    <location>
        <begin position="40"/>
        <end position="41"/>
    </location>
</feature>
<feature type="sequence conflict" description="In Ref. 3; AA sequence." evidence="10" ref="3">
    <original>KE</original>
    <variation>NT</variation>
    <location>
        <begin position="44"/>
        <end position="45"/>
    </location>
</feature>
<organism>
    <name type="scientific">Nitratidesulfovibrio vulgaris (strain ATCC 29579 / DSM 644 / CCUG 34227 / NCIMB 8303 / VKM B-1760 / Hildenborough)</name>
    <name type="common">Desulfovibrio vulgaris</name>
    <dbReference type="NCBI Taxonomy" id="882"/>
    <lineage>
        <taxon>Bacteria</taxon>
        <taxon>Pseudomonadati</taxon>
        <taxon>Thermodesulfobacteriota</taxon>
        <taxon>Desulfovibrionia</taxon>
        <taxon>Desulfovibrionales</taxon>
        <taxon>Desulfovibrionaceae</taxon>
        <taxon>Nitratidesulfovibrio</taxon>
    </lineage>
</organism>
<evidence type="ECO:0000250" key="1">
    <source>
        <dbReference type="UniProtKB" id="Q934F5"/>
    </source>
</evidence>
<evidence type="ECO:0000255" key="2">
    <source>
        <dbReference type="PROSITE-ProRule" id="PRU00648"/>
    </source>
</evidence>
<evidence type="ECO:0000255" key="3">
    <source>
        <dbReference type="PROSITE-ProRule" id="PRU01004"/>
    </source>
</evidence>
<evidence type="ECO:0000269" key="4">
    <source>
    </source>
</evidence>
<evidence type="ECO:0000269" key="5">
    <source>
    </source>
</evidence>
<evidence type="ECO:0000269" key="6">
    <source>
    </source>
</evidence>
<evidence type="ECO:0000303" key="7">
    <source>
    </source>
</evidence>
<evidence type="ECO:0000305" key="8"/>
<evidence type="ECO:0000305" key="9">
    <source>
    </source>
</evidence>
<evidence type="ECO:0000305" key="10">
    <source>
    </source>
</evidence>
<evidence type="ECO:0000312" key="11">
    <source>
        <dbReference type="EMBL" id="AAS97284.1"/>
    </source>
</evidence>
<protein>
    <recommendedName>
        <fullName evidence="7">Formate dehydrogenase 2 subunit alpha (cytochrome c-553)</fullName>
        <shortName evidence="7">FDH2 subunit alpha (cytochrome c-553)</shortName>
        <ecNumber evidence="5 6">1.17.2.3</ecNumber>
    </recommendedName>
    <alternativeName>
        <fullName>Formate dehydrogenase large subunit (cytochrome c-553)</fullName>
    </alternativeName>
</protein>
<gene>
    <name evidence="11" type="primary">fdnG-3</name>
    <name evidence="11" type="ordered locus">DVU_2812</name>
</gene>
<sequence length="1012" mass="113389">MKTTRRSFLKLVGVSVVGLSLGQLGFDLEDAQAYAVKLKIEGAKEVGTVCPFCSVCCQVIAYVRNGKLVSTEGDPDFPVNEGALCAKGAALFSMYTNPHRLTKPLYRAPHSDKWVEKDWDWTLNQIARRVKDARDKDMILKNDKGQTVNRLESIFMMGTSHASNEECAVIHQAMRGLGVVHMDHQARVUHSPTVAALAESFGRGAMTNHWIDIKNTDAVLIIGSNAAEHHPVAFKWIMRARDNGAVLMHVDPKFSRTSARCDFHVPLRSGTDIAFLGGMVNHIIAKDLYFKDYVANYTNAAFVVGKDYAFEDGIFSGYDPKTRTYDRSKWEFEKGPDGGPVMDPTLKNERCVFNLMKKHYERYTLKNVSDVTGVSEENLLRVYDAFCATGRPDKAGTILYALGWTQHTVGVQNIRTSTLIQLLLGNIGVAGGGINALRGEPNVQGSTDHALLYHILPGYNAMPVAQWQTLADYNKANTPVTTLKNSANWWSNRPKYVASLLKGWFGDAATPENDFCYEYLPKLEKGEDYSYMYVMDRMYHGKLKGGFIFGVNPMNSFPNTNKMRAALDKLDWLVCSELHNSETTDNWKRPGVDPKACKTEVFLLPSAHRVEKAGTISNSGRWLQWFDKAVEPGQARNFADIFVPLVNKIRALYKAEGGTLPDPVLKLHWTDKFDPEEWTRRINGFFWADTKVGDKEYKRGQLVPAFGQLKDDGSTSSLNWLYTGSYTEEDGNKSKRRDARQTPMQANIGLFPNWSWCWPVNRRILYNRASVDVNGKPWNPKKAVIEWDGAKWVGDVPDGPWPPMADKEKGKLPFIMNKDGFAQFYGTGRMDGPFPEHYEPAETPLDSHPFSKQLSSPVYKFHTSDMDQIAKAADPKYPIVLTTYSLTEHWCGGGETRNVPNLLETEPQLYIEMSPELAEEKGIKNGDGVIVESIRGRAEAIAMVTVRIRPFTVMGKTVHLVGMPFAYGWTTPKCGDSTNRLTVGAYDPNTTIPESKACLVNVRKADKLTEIA</sequence>
<reference key="1">
    <citation type="journal article" date="2004" name="Nat. Biotechnol.">
        <title>The genome sequence of the anaerobic, sulfate-reducing bacterium Desulfovibrio vulgaris Hildenborough.</title>
        <authorList>
            <person name="Heidelberg J.F."/>
            <person name="Seshadri R."/>
            <person name="Haveman S.A."/>
            <person name="Hemme C.L."/>
            <person name="Paulsen I.T."/>
            <person name="Kolonay J.F."/>
            <person name="Eisen J.A."/>
            <person name="Ward N.L."/>
            <person name="Methe B.A."/>
            <person name="Brinkac L.M."/>
            <person name="Daugherty S.C."/>
            <person name="DeBoy R.T."/>
            <person name="Dodson R.J."/>
            <person name="Durkin A.S."/>
            <person name="Madupu R."/>
            <person name="Nelson W.C."/>
            <person name="Sullivan S.A."/>
            <person name="Fouts D.E."/>
            <person name="Haft D.H."/>
            <person name="Selengut J."/>
            <person name="Peterson J.D."/>
            <person name="Davidsen T.M."/>
            <person name="Zafar N."/>
            <person name="Zhou L."/>
            <person name="Radune D."/>
            <person name="Dimitrov G."/>
            <person name="Hance M."/>
            <person name="Tran K."/>
            <person name="Khouri H.M."/>
            <person name="Gill J."/>
            <person name="Utterback T.R."/>
            <person name="Feldblyum T.V."/>
            <person name="Wall J.D."/>
            <person name="Voordouw G."/>
            <person name="Fraser C.M."/>
        </authorList>
    </citation>
    <scope>NUCLEOTIDE SEQUENCE [LARGE SCALE GENOMIC DNA]</scope>
    <source>
        <strain>ATCC 29579 / DSM 644 / CCUG 34227 / NCIMB 8303 / VKM B-1760 / Hildenborough</strain>
    </source>
</reference>
<reference key="2">
    <citation type="journal article" date="2011" name="J. Bacteriol.">
        <title>Tungsten and molybdenum regulation of formate dehydrogenase expression in Desulfovibrio vulgaris Hildenborough.</title>
        <authorList>
            <person name="da Silva S.M."/>
            <person name="Pimentel C."/>
            <person name="Valente F.M."/>
            <person name="Rodrigues-Pousada C."/>
            <person name="Pereira I.A."/>
        </authorList>
    </citation>
    <scope>PROTEIN SEQUENCE OF 34-38</scope>
    <scope>SUBUNIT</scope>
    <scope>INDUCTION BY MOLYBDENUM</scope>
    <scope>COFACTOR</scope>
    <scope>BIOPHYSICOCHEMICAL PROPERTIES</scope>
    <scope>CATALYTIC ACTIVITY</scope>
</reference>
<reference key="3">
    <citation type="journal article" date="1995" name="FEMS Microbiol. Lett.">
        <title>Purification and characterization of the formate dehydrogenase from Desulfovibrio vulgaris Hildenborough.</title>
        <authorList>
            <person name="Sebban C."/>
            <person name="Blanchard L."/>
            <person name="Bruschi M."/>
            <person name="Guerlesquin F."/>
        </authorList>
    </citation>
    <scope>PROTEIN SEQUENCE OF 35-47</scope>
    <scope>SUBUNIT</scope>
    <scope>SUBCELLULAR LOCATION</scope>
    <scope>BIOPHYSICOCHEMICAL PROPERTIES</scope>
</reference>
<reference key="4">
    <citation type="journal article" date="2005" name="Biochemistry">
        <title>Role of the tetrahemic subunit in Desulfovibrio vulgaris hildenborough formate dehydrogenase.</title>
        <authorList>
            <person name="ElAntak L."/>
            <person name="Dolla A."/>
            <person name="Durand M.C."/>
            <person name="Bianco P."/>
            <person name="Guerlesquin F."/>
        </authorList>
    </citation>
    <scope>SUBUNIT</scope>
    <scope>NOMENCLATURE</scope>
</reference>
<proteinExistence type="evidence at protein level"/>
<comment type="function">
    <text evidence="6">Alpha chain of the formate dehydrogenase (FDH) that catalyzes the reversible two-electron oxidation of formate to carbon dioxide. The alpha subunit of formate dehydrogenase forms the active site.</text>
</comment>
<comment type="catalytic activity">
    <reaction evidence="5 6">
        <text>2 Fe(III)-[cytochrome c553] + formate = 2 Fe(II)-[cytochrome c553] + CO2 + H(+)</text>
        <dbReference type="Rhea" id="RHEA:15189"/>
        <dbReference type="Rhea" id="RHEA-COMP:10433"/>
        <dbReference type="Rhea" id="RHEA-COMP:10434"/>
        <dbReference type="ChEBI" id="CHEBI:15378"/>
        <dbReference type="ChEBI" id="CHEBI:15740"/>
        <dbReference type="ChEBI" id="CHEBI:16526"/>
        <dbReference type="ChEBI" id="CHEBI:29033"/>
        <dbReference type="ChEBI" id="CHEBI:29034"/>
        <dbReference type="EC" id="1.17.2.3"/>
    </reaction>
</comment>
<comment type="cofactor">
    <cofactor evidence="1">
        <name>[4Fe-4S] cluster</name>
        <dbReference type="ChEBI" id="CHEBI:49883"/>
    </cofactor>
    <text evidence="1">Binds 1 [4Fe-4S] cluster per subunit.</text>
</comment>
<comment type="cofactor">
    <cofactor evidence="5">
        <name>W-bis(molybdopterin guanine dinucleotide)</name>
        <dbReference type="ChEBI" id="CHEBI:60537"/>
    </cofactor>
    <text evidence="5">Binds 1 W-bis(molybdopterin guanine dinucleotide) (W-bis-MGD) cofactor per subunit.</text>
</comment>
<comment type="biophysicochemical properties">
    <kinetics>
        <KM evidence="6">1.7 mM for formate (at pH 9.5 and 30 degrees Celsius)</KM>
        <KM evidence="5">8 uM for formate (at pH 7.6)</KM>
        <Vmax evidence="5">77.0 umol/min/mg enzyme (at pH 7.6)</Vmax>
        <text evidence="5">Measurements have been done with the heterotrimer complex. kcat is 262 sec(-1) with formate as substrate (at pH 7.6).</text>
    </kinetics>
    <phDependence>
        <text evidence="6">Optimum pH is 9.5.</text>
    </phDependence>
    <temperatureDependence>
        <text evidence="6">Optimum temperature is 51 degrees Celsius.</text>
    </temperatureDependence>
</comment>
<comment type="subunit">
    <text evidence="4 5 6">Heterotrimer of cytochrome c3 FDH2C and formate dehydrogenase FDH2 alpha and beta subunits that forms the FdhABC(3) complex.</text>
</comment>
<comment type="subcellular location">
    <subcellularLocation>
        <location evidence="6">Periplasm</location>
    </subcellularLocation>
</comment>
<comment type="induction">
    <text evidence="5">The trimeric FdhABC(3) complex is the main formate dehydrogenase enzyme in the presence of molybdenum.</text>
</comment>
<comment type="PTM">
    <text evidence="2">Predicted to be exported by the Tat system. The position of the signal peptide cleavage has not been experimentally proven.</text>
</comment>
<comment type="similarity">
    <text evidence="8">Belongs to the prokaryotic molybdopterin-containing oxidoreductase family.</text>
</comment>
<accession>Q727P3</accession>
<name>FDNGA_NITV2</name>